<feature type="chain" id="PRO_0000068991" description="Adenosine receptor A1">
    <location>
        <begin position="1"/>
        <end position="326"/>
    </location>
</feature>
<feature type="topological domain" description="Extracellular" evidence="1">
    <location>
        <begin position="1"/>
        <end position="10"/>
    </location>
</feature>
<feature type="transmembrane region" description="Helical; Name=1" evidence="1">
    <location>
        <begin position="11"/>
        <end position="33"/>
    </location>
</feature>
<feature type="topological domain" description="Cytoplasmic" evidence="1">
    <location>
        <begin position="34"/>
        <end position="46"/>
    </location>
</feature>
<feature type="transmembrane region" description="Helical; Name=2" evidence="1">
    <location>
        <begin position="47"/>
        <end position="69"/>
    </location>
</feature>
<feature type="topological domain" description="Extracellular" evidence="1">
    <location>
        <begin position="70"/>
        <end position="80"/>
    </location>
</feature>
<feature type="transmembrane region" description="Helical; Name=3" evidence="1">
    <location>
        <begin position="81"/>
        <end position="102"/>
    </location>
</feature>
<feature type="topological domain" description="Cytoplasmic" evidence="1">
    <location>
        <begin position="103"/>
        <end position="123"/>
    </location>
</feature>
<feature type="transmembrane region" description="Helical; Name=4" evidence="1">
    <location>
        <begin position="124"/>
        <end position="146"/>
    </location>
</feature>
<feature type="topological domain" description="Extracellular" evidence="1">
    <location>
        <begin position="147"/>
        <end position="176"/>
    </location>
</feature>
<feature type="transmembrane region" description="Helical; Name=5" evidence="1">
    <location>
        <begin position="177"/>
        <end position="201"/>
    </location>
</feature>
<feature type="topological domain" description="Cytoplasmic" evidence="1">
    <location>
        <begin position="202"/>
        <end position="235"/>
    </location>
</feature>
<feature type="transmembrane region" description="Helical; Name=6" evidence="1">
    <location>
        <begin position="236"/>
        <end position="259"/>
    </location>
</feature>
<feature type="topological domain" description="Extracellular" evidence="1">
    <location>
        <begin position="260"/>
        <end position="267"/>
    </location>
</feature>
<feature type="transmembrane region" description="Helical; Name=7" evidence="1">
    <location>
        <begin position="268"/>
        <end position="292"/>
    </location>
</feature>
<feature type="topological domain" description="Cytoplasmic" evidence="1">
    <location>
        <begin position="293"/>
        <end position="326"/>
    </location>
</feature>
<feature type="lipid moiety-binding region" description="S-palmitoyl cysteine" evidence="1">
    <location>
        <position position="309"/>
    </location>
</feature>
<feature type="glycosylation site" description="N-linked (GlcNAc...) asparagine" evidence="1">
    <location>
        <position position="159"/>
    </location>
</feature>
<feature type="disulfide bond" evidence="2">
    <location>
        <begin position="80"/>
        <end position="169"/>
    </location>
</feature>
<feature type="splice variant" id="VSP_034401" description="In isoform 2." evidence="6">
    <original>YKMVVTPRRAA</original>
    <variation>RISQCMASTKS</variation>
    <location>
        <begin position="115"/>
        <end position="125"/>
    </location>
</feature>
<feature type="splice variant" id="VSP_034402" description="In isoform 2." evidence="6">
    <location>
        <begin position="126"/>
        <end position="326"/>
    </location>
</feature>
<feature type="sequence variant" id="VAR_044138" description="In dbSNP:rs11547175." evidence="3">
    <original>A</original>
    <variation>S</variation>
    <location>
        <position position="43"/>
    </location>
</feature>
<feature type="sequence variant" id="VAR_044139" description="In dbSNP:rs11547174." evidence="3">
    <original>S</original>
    <variation>P</variation>
    <location>
        <position position="50"/>
    </location>
</feature>
<feature type="sequence variant" id="VAR_044140" description="In dbSNP:rs11547176." evidence="3">
    <original>R</original>
    <variation>H</variation>
    <location>
        <position position="105"/>
    </location>
</feature>
<feature type="sequence variant" id="VAR_035754" description="In a colorectal cancer sample; somatic mutation; dbSNP:rs899207013." evidence="4">
    <original>E</original>
    <variation>K</variation>
    <location>
        <position position="170"/>
    </location>
</feature>
<feature type="sequence variant" id="VAR_044141" description="In dbSNP:rs17852405." evidence="3">
    <original>P</original>
    <variation>Q</variation>
    <location>
        <position position="261"/>
    </location>
</feature>
<feature type="sequence variant" id="VAR_078549" description="Found in a family with early-onset autosomal recessive parkinsonism and intellectual disability; uncertain significance; does not affect protein abundance; does not affect expression at the cell surface; dbSNP:rs748346254." evidence="5">
    <original>G</original>
    <variation>S</variation>
    <location>
        <position position="279"/>
    </location>
</feature>
<feature type="sequence conflict" description="In Ref. 7; BAF82617." evidence="7" ref="7">
    <original>A</original>
    <variation>T</variation>
    <location>
        <position position="312"/>
    </location>
</feature>
<feature type="helix" evidence="8">
    <location>
        <begin position="7"/>
        <end position="36"/>
    </location>
</feature>
<feature type="helix" evidence="8">
    <location>
        <begin position="38"/>
        <end position="40"/>
    </location>
</feature>
<feature type="helix" evidence="8">
    <location>
        <begin position="43"/>
        <end position="60"/>
    </location>
</feature>
<feature type="helix" evidence="8">
    <location>
        <begin position="62"/>
        <end position="71"/>
    </location>
</feature>
<feature type="strand" evidence="9">
    <location>
        <begin position="74"/>
        <end position="76"/>
    </location>
</feature>
<feature type="helix" evidence="8">
    <location>
        <begin position="77"/>
        <end position="110"/>
    </location>
</feature>
<feature type="turn" evidence="8">
    <location>
        <begin position="112"/>
        <end position="114"/>
    </location>
</feature>
<feature type="helix" evidence="8">
    <location>
        <begin position="115"/>
        <end position="118"/>
    </location>
</feature>
<feature type="helix" evidence="8">
    <location>
        <begin position="121"/>
        <end position="140"/>
    </location>
</feature>
<feature type="helix" evidence="8">
    <location>
        <begin position="141"/>
        <end position="144"/>
    </location>
</feature>
<feature type="helix" evidence="8">
    <location>
        <begin position="149"/>
        <end position="159"/>
    </location>
</feature>
<feature type="strand" evidence="9">
    <location>
        <begin position="166"/>
        <end position="168"/>
    </location>
</feature>
<feature type="helix" evidence="8">
    <location>
        <begin position="171"/>
        <end position="174"/>
    </location>
</feature>
<feature type="helix" evidence="8">
    <location>
        <begin position="177"/>
        <end position="182"/>
    </location>
</feature>
<feature type="helix" evidence="8">
    <location>
        <begin position="184"/>
        <end position="188"/>
    </location>
</feature>
<feature type="helix" evidence="8">
    <location>
        <begin position="190"/>
        <end position="211"/>
    </location>
</feature>
<feature type="helix" evidence="8">
    <location>
        <begin position="228"/>
        <end position="259"/>
    </location>
</feature>
<feature type="helix" evidence="8">
    <location>
        <begin position="267"/>
        <end position="291"/>
    </location>
</feature>
<feature type="helix" evidence="8">
    <location>
        <begin position="293"/>
        <end position="306"/>
    </location>
</feature>
<protein>
    <recommendedName>
        <fullName>Adenosine receptor A1</fullName>
    </recommendedName>
</protein>
<accession>P30542</accession>
<accession>A6NFY5</accession>
<accession>A6NGP4</accession>
<accession>A8K1L3</accession>
<accession>B3KXQ4</accession>
<accession>D2CGD0</accession>
<accession>Q6FHK3</accession>
<accession>Q8TAM8</accession>
<dbReference type="EMBL" id="S45235">
    <property type="protein sequence ID" value="AAB23388.1"/>
    <property type="molecule type" value="mRNA"/>
</dbReference>
<dbReference type="EMBL" id="S56143">
    <property type="protein sequence ID" value="AAB25533.2"/>
    <property type="molecule type" value="mRNA"/>
</dbReference>
<dbReference type="EMBL" id="L22214">
    <property type="protein sequence ID" value="AAA17544.1"/>
    <property type="molecule type" value="mRNA"/>
</dbReference>
<dbReference type="EMBL" id="X68485">
    <property type="protein sequence ID" value="CAA48503.1"/>
    <property type="molecule type" value="mRNA"/>
</dbReference>
<dbReference type="EMBL" id="AB004662">
    <property type="protein sequence ID" value="BAA20433.1"/>
    <property type="molecule type" value="mRNA"/>
</dbReference>
<dbReference type="EMBL" id="EF057066">
    <property type="protein sequence ID" value="ABO25743.1"/>
    <property type="molecule type" value="mRNA"/>
</dbReference>
<dbReference type="EMBL" id="AK127752">
    <property type="protein sequence ID" value="BAG54566.1"/>
    <property type="molecule type" value="mRNA"/>
</dbReference>
<dbReference type="EMBL" id="AK289928">
    <property type="protein sequence ID" value="BAF82617.1"/>
    <property type="molecule type" value="mRNA"/>
</dbReference>
<dbReference type="EMBL" id="AY136746">
    <property type="protein sequence ID" value="AAN01272.1"/>
    <property type="molecule type" value="mRNA"/>
</dbReference>
<dbReference type="EMBL" id="BT019854">
    <property type="protein sequence ID" value="AAV38657.1"/>
    <property type="molecule type" value="mRNA"/>
</dbReference>
<dbReference type="EMBL" id="CR541749">
    <property type="protein sequence ID" value="CAG46549.1"/>
    <property type="molecule type" value="mRNA"/>
</dbReference>
<dbReference type="EMBL" id="AC105940">
    <property type="status" value="NOT_ANNOTATED_CDS"/>
    <property type="molecule type" value="Genomic_DNA"/>
</dbReference>
<dbReference type="EMBL" id="CH471067">
    <property type="protein sequence ID" value="EAW91465.1"/>
    <property type="molecule type" value="Genomic_DNA"/>
</dbReference>
<dbReference type="EMBL" id="BC026340">
    <property type="protein sequence ID" value="AAH26340.1"/>
    <property type="molecule type" value="mRNA"/>
</dbReference>
<dbReference type="CCDS" id="CCDS1434.1">
    <molecule id="P30542-1"/>
</dbReference>
<dbReference type="PIR" id="A53005">
    <property type="entry name" value="A53005"/>
</dbReference>
<dbReference type="RefSeq" id="NP_000665.1">
    <molecule id="P30542-1"/>
    <property type="nucleotide sequence ID" value="NM_000674.3"/>
</dbReference>
<dbReference type="RefSeq" id="NP_001041695.1">
    <molecule id="P30542-1"/>
    <property type="nucleotide sequence ID" value="NM_001048230.2"/>
</dbReference>
<dbReference type="PDB" id="5N2S">
    <property type="method" value="X-ray"/>
    <property type="resolution" value="3.30 A"/>
    <property type="chains" value="A=4-316"/>
</dbReference>
<dbReference type="PDB" id="5UEN">
    <property type="method" value="X-ray"/>
    <property type="resolution" value="3.20 A"/>
    <property type="chains" value="A/B=2-211, A/B=228-311"/>
</dbReference>
<dbReference type="PDB" id="6D9H">
    <property type="method" value="EM"/>
    <property type="resolution" value="3.60 A"/>
    <property type="chains" value="R=2-326"/>
</dbReference>
<dbReference type="PDB" id="7LD3">
    <property type="method" value="EM"/>
    <property type="resolution" value="3.20 A"/>
    <property type="chains" value="R=2-326"/>
</dbReference>
<dbReference type="PDB" id="7LD4">
    <property type="method" value="EM"/>
    <property type="resolution" value="3.30 A"/>
    <property type="chains" value="R=2-326"/>
</dbReference>
<dbReference type="PDBsum" id="5N2S"/>
<dbReference type="PDBsum" id="5UEN"/>
<dbReference type="PDBsum" id="6D9H"/>
<dbReference type="PDBsum" id="7LD3"/>
<dbReference type="PDBsum" id="7LD4"/>
<dbReference type="EMDB" id="EMD-23280"/>
<dbReference type="EMDB" id="EMD-23281"/>
<dbReference type="EMDB" id="EMD-7835"/>
<dbReference type="SMR" id="P30542"/>
<dbReference type="BioGRID" id="106646">
    <property type="interactions" value="17"/>
</dbReference>
<dbReference type="CORUM" id="P30542"/>
<dbReference type="FunCoup" id="P30542">
    <property type="interactions" value="889"/>
</dbReference>
<dbReference type="IntAct" id="P30542">
    <property type="interactions" value="12"/>
</dbReference>
<dbReference type="MINT" id="P30542"/>
<dbReference type="STRING" id="9606.ENSP00000356205"/>
<dbReference type="BindingDB" id="P30542"/>
<dbReference type="ChEMBL" id="CHEMBL226"/>
<dbReference type="DrugBank" id="DB07954">
    <property type="generic name" value="3-isobutyl-1-methyl-7H-xanthine"/>
</dbReference>
<dbReference type="DrugBank" id="DB08770">
    <property type="generic name" value="4-{2-[(7-amino-2-furan-2-yl[1,2,4]triazolo[1,5-a][1,3,5]triazin-5-yl)amino]ethyl}phenol"/>
</dbReference>
<dbReference type="DrugBank" id="DB02282">
    <property type="generic name" value="5'-S-methyl-5'-thioadenosine"/>
</dbReference>
<dbReference type="DrugBank" id="DB00640">
    <property type="generic name" value="Adenosine"/>
</dbReference>
<dbReference type="DrugBank" id="DB01223">
    <property type="generic name" value="Aminophylline"/>
</dbReference>
<dbReference type="DrugBank" id="DB14018">
    <property type="generic name" value="Bromotheophylline"/>
</dbReference>
<dbReference type="DrugBank" id="DB00201">
    <property type="generic name" value="Caffeine"/>
</dbReference>
<dbReference type="DrugBank" id="DB09061">
    <property type="generic name" value="Cannabidiol"/>
</dbReference>
<dbReference type="DrugBank" id="DB16118">
    <property type="generic name" value="Capadenoson"/>
</dbReference>
<dbReference type="DrugBank" id="DB04932">
    <property type="generic name" value="Defibrotide"/>
</dbReference>
<dbReference type="DrugBank" id="DB12446">
    <property type="generic name" value="Derenofylline"/>
</dbReference>
<dbReference type="DrugBank" id="DB12946">
    <property type="generic name" value="DPCPX"/>
</dbReference>
<dbReference type="DrugBank" id="DB00651">
    <property type="generic name" value="Dyphylline"/>
</dbReference>
<dbReference type="DrugBank" id="DB00824">
    <property type="generic name" value="Enprofylline"/>
</dbReference>
<dbReference type="DrugBank" id="DB06484">
    <property type="generic name" value="FK352B"/>
</dbReference>
<dbReference type="DrugBank" id="DB07776">
    <property type="generic name" value="Flavone"/>
</dbReference>
<dbReference type="DrugBank" id="DB00996">
    <property type="generic name" value="Gabapentin"/>
</dbReference>
<dbReference type="DrugBank" id="DB12760">
    <property type="generic name" value="GW-493838"/>
</dbReference>
<dbReference type="DrugBank" id="DB11757">
    <property type="generic name" value="Istradefylline"/>
</dbReference>
<dbReference type="DrugBank" id="DB00555">
    <property type="generic name" value="Lamotrigine"/>
</dbReference>
<dbReference type="DrugBank" id="DB06471">
    <property type="generic name" value="Naxifylline"/>
</dbReference>
<dbReference type="DrugBank" id="DB13138">
    <property type="generic name" value="Neladenoson bialanate"/>
</dbReference>
<dbReference type="DrugBank" id="DB01303">
    <property type="generic name" value="Oxtriphylline"/>
</dbReference>
<dbReference type="DrugBank" id="DB00806">
    <property type="generic name" value="Pentoxifylline"/>
</dbReference>
<dbReference type="DrugBank" id="DB16288">
    <property type="generic name" value="Peoniflorin"/>
</dbReference>
<dbReference type="DrugBank" id="DB12670">
    <property type="generic name" value="Rolofylline"/>
</dbReference>
<dbReference type="DrugBank" id="DB08517">
    <property type="generic name" value="Sakuranetin"/>
</dbReference>
<dbReference type="DrugBank" id="DB16325">
    <property type="generic name" value="Selodenoson"/>
</dbReference>
<dbReference type="DrugBank" id="DB04954">
    <property type="generic name" value="Tecadenoson"/>
</dbReference>
<dbReference type="DrugBank" id="DB01412">
    <property type="generic name" value="Theobromine"/>
</dbReference>
<dbReference type="DrugBank" id="DB00277">
    <property type="generic name" value="Theophylline"/>
</dbReference>
<dbReference type="DrugBank" id="DB12569">
    <property type="generic name" value="Tonapofylline"/>
</dbReference>
<dbReference type="DrugBank" id="DB13122">
    <property type="generic name" value="Trabodenoson"/>
</dbReference>
<dbReference type="DrugBank" id="DB00193">
    <property type="generic name" value="Tramadol"/>
</dbReference>
<dbReference type="DrugCentral" id="P30542"/>
<dbReference type="GuidetoPHARMACOLOGY" id="18"/>
<dbReference type="TCDB" id="9.A.14.3.4">
    <property type="family name" value="the g-protein-coupled receptor (gpcr) family"/>
</dbReference>
<dbReference type="GlyConnect" id="992">
    <property type="glycosylation" value="6 N-Linked glycans (1 site)"/>
</dbReference>
<dbReference type="GlyCosmos" id="P30542">
    <property type="glycosylation" value="1 site, 6 glycans"/>
</dbReference>
<dbReference type="GlyGen" id="P30542">
    <property type="glycosylation" value="1 site, 6 N-linked glycans (1 site)"/>
</dbReference>
<dbReference type="iPTMnet" id="P30542"/>
<dbReference type="PhosphoSitePlus" id="P30542"/>
<dbReference type="SwissPalm" id="P30542"/>
<dbReference type="BioMuta" id="ADORA1"/>
<dbReference type="DMDM" id="231473"/>
<dbReference type="jPOST" id="P30542"/>
<dbReference type="MassIVE" id="P30542"/>
<dbReference type="PaxDb" id="9606-ENSP00000356205"/>
<dbReference type="PeptideAtlas" id="P30542"/>
<dbReference type="ProteomicsDB" id="54718">
    <molecule id="P30542-1"/>
</dbReference>
<dbReference type="Antibodypedia" id="20660">
    <property type="antibodies" value="490 antibodies from 37 providers"/>
</dbReference>
<dbReference type="DNASU" id="134"/>
<dbReference type="Ensembl" id="ENST00000309502.7">
    <molecule id="P30542-1"/>
    <property type="protein sequence ID" value="ENSP00000308549.3"/>
    <property type="gene ID" value="ENSG00000163485.18"/>
</dbReference>
<dbReference type="Ensembl" id="ENST00000337894.9">
    <molecule id="P30542-1"/>
    <property type="protein sequence ID" value="ENSP00000338435.4"/>
    <property type="gene ID" value="ENSG00000163485.18"/>
</dbReference>
<dbReference type="Ensembl" id="ENST00000367235.1">
    <molecule id="P30542-2"/>
    <property type="protein sequence ID" value="ENSP00000356204.1"/>
    <property type="gene ID" value="ENSG00000163485.18"/>
</dbReference>
<dbReference type="Ensembl" id="ENST00000367236.8">
    <molecule id="P30542-1"/>
    <property type="protein sequence ID" value="ENSP00000356205.4"/>
    <property type="gene ID" value="ENSG00000163485.18"/>
</dbReference>
<dbReference type="GeneID" id="134"/>
<dbReference type="KEGG" id="hsa:134"/>
<dbReference type="MANE-Select" id="ENST00000337894.9">
    <property type="protein sequence ID" value="ENSP00000338435.4"/>
    <property type="RefSeq nucleotide sequence ID" value="NM_000674.3"/>
    <property type="RefSeq protein sequence ID" value="NP_000665.1"/>
</dbReference>
<dbReference type="UCSC" id="uc001gze.1">
    <molecule id="P30542-1"/>
    <property type="organism name" value="human"/>
</dbReference>
<dbReference type="AGR" id="HGNC:262"/>
<dbReference type="CTD" id="134"/>
<dbReference type="DisGeNET" id="134"/>
<dbReference type="GeneCards" id="ADORA1"/>
<dbReference type="HGNC" id="HGNC:262">
    <property type="gene designation" value="ADORA1"/>
</dbReference>
<dbReference type="HPA" id="ENSG00000163485">
    <property type="expression patterns" value="Tissue enhanced (brain, testis)"/>
</dbReference>
<dbReference type="MalaCards" id="ADORA1"/>
<dbReference type="MIM" id="102775">
    <property type="type" value="gene"/>
</dbReference>
<dbReference type="neXtProt" id="NX_P30542"/>
<dbReference type="OpenTargets" id="ENSG00000163485"/>
<dbReference type="PharmGKB" id="PA24583"/>
<dbReference type="VEuPathDB" id="HostDB:ENSG00000163485"/>
<dbReference type="eggNOG" id="KOG3656">
    <property type="taxonomic scope" value="Eukaryota"/>
</dbReference>
<dbReference type="GeneTree" id="ENSGT01030000234555"/>
<dbReference type="HOGENOM" id="CLU_009579_11_5_1"/>
<dbReference type="InParanoid" id="P30542"/>
<dbReference type="OMA" id="FCCKDTP"/>
<dbReference type="OrthoDB" id="5984709at2759"/>
<dbReference type="PAN-GO" id="P30542">
    <property type="GO annotations" value="5 GO annotations based on evolutionary models"/>
</dbReference>
<dbReference type="PhylomeDB" id="P30542"/>
<dbReference type="TreeFam" id="TF325296"/>
<dbReference type="PathwayCommons" id="P30542"/>
<dbReference type="Reactome" id="R-HSA-417973">
    <property type="pathway name" value="Adenosine P1 receptors"/>
</dbReference>
<dbReference type="Reactome" id="R-HSA-418594">
    <property type="pathway name" value="G alpha (i) signalling events"/>
</dbReference>
<dbReference type="SignaLink" id="P30542"/>
<dbReference type="SIGNOR" id="P30542"/>
<dbReference type="BioGRID-ORCS" id="134">
    <property type="hits" value="13 hits in 1155 CRISPR screens"/>
</dbReference>
<dbReference type="ChiTaRS" id="ADORA1">
    <property type="organism name" value="human"/>
</dbReference>
<dbReference type="GeneWiki" id="Adenosine_A1_receptor"/>
<dbReference type="GenomeRNAi" id="134"/>
<dbReference type="Pharos" id="P30542">
    <property type="development level" value="Tclin"/>
</dbReference>
<dbReference type="PRO" id="PR:P30542"/>
<dbReference type="Proteomes" id="UP000005640">
    <property type="component" value="Chromosome 1"/>
</dbReference>
<dbReference type="RNAct" id="P30542">
    <property type="molecule type" value="protein"/>
</dbReference>
<dbReference type="Bgee" id="ENSG00000163485">
    <property type="expression patterns" value="Expressed in inferior vagus X ganglion and 180 other cell types or tissues"/>
</dbReference>
<dbReference type="ExpressionAtlas" id="P30542">
    <property type="expression patterns" value="baseline and differential"/>
</dbReference>
<dbReference type="GO" id="GO:0032279">
    <property type="term" value="C:asymmetric synapse"/>
    <property type="evidence" value="ECO:0007669"/>
    <property type="project" value="Ensembl"/>
</dbReference>
<dbReference type="GO" id="GO:0030673">
    <property type="term" value="C:axolemma"/>
    <property type="evidence" value="ECO:0007669"/>
    <property type="project" value="Ensembl"/>
</dbReference>
<dbReference type="GO" id="GO:0016323">
    <property type="term" value="C:basolateral plasma membrane"/>
    <property type="evidence" value="ECO:0007669"/>
    <property type="project" value="Ensembl"/>
</dbReference>
<dbReference type="GO" id="GO:0044305">
    <property type="term" value="C:calyx of Held"/>
    <property type="evidence" value="ECO:0007669"/>
    <property type="project" value="Ensembl"/>
</dbReference>
<dbReference type="GO" id="GO:0005929">
    <property type="term" value="C:cilium"/>
    <property type="evidence" value="ECO:0000314"/>
    <property type="project" value="HPA"/>
</dbReference>
<dbReference type="GO" id="GO:0030425">
    <property type="term" value="C:dendrite"/>
    <property type="evidence" value="ECO:0000318"/>
    <property type="project" value="GO_Central"/>
</dbReference>
<dbReference type="GO" id="GO:0043197">
    <property type="term" value="C:dendritic spine"/>
    <property type="evidence" value="ECO:0007669"/>
    <property type="project" value="Ensembl"/>
</dbReference>
<dbReference type="GO" id="GO:0043025">
    <property type="term" value="C:neuronal cell body"/>
    <property type="evidence" value="ECO:0007669"/>
    <property type="project" value="Ensembl"/>
</dbReference>
<dbReference type="GO" id="GO:0005886">
    <property type="term" value="C:plasma membrane"/>
    <property type="evidence" value="ECO:0000314"/>
    <property type="project" value="HPA"/>
</dbReference>
<dbReference type="GO" id="GO:0045211">
    <property type="term" value="C:postsynaptic membrane"/>
    <property type="evidence" value="ECO:0007669"/>
    <property type="project" value="Ensembl"/>
</dbReference>
<dbReference type="GO" id="GO:0048786">
    <property type="term" value="C:presynaptic active zone"/>
    <property type="evidence" value="ECO:0007669"/>
    <property type="project" value="Ensembl"/>
</dbReference>
<dbReference type="GO" id="GO:0042734">
    <property type="term" value="C:presynaptic membrane"/>
    <property type="evidence" value="ECO:0007669"/>
    <property type="project" value="Ensembl"/>
</dbReference>
<dbReference type="GO" id="GO:0045202">
    <property type="term" value="C:synapse"/>
    <property type="evidence" value="ECO:0000318"/>
    <property type="project" value="GO_Central"/>
</dbReference>
<dbReference type="GO" id="GO:0043195">
    <property type="term" value="C:terminal bouton"/>
    <property type="evidence" value="ECO:0007669"/>
    <property type="project" value="Ensembl"/>
</dbReference>
<dbReference type="GO" id="GO:0001609">
    <property type="term" value="F:G protein-coupled adenosine receptor activity"/>
    <property type="evidence" value="ECO:0000250"/>
    <property type="project" value="BHF-UCL"/>
</dbReference>
<dbReference type="GO" id="GO:0001664">
    <property type="term" value="F:G protein-coupled receptor binding"/>
    <property type="evidence" value="ECO:0000250"/>
    <property type="project" value="BHF-UCL"/>
</dbReference>
<dbReference type="GO" id="GO:0031683">
    <property type="term" value="F:G-protein beta/gamma-subunit complex binding"/>
    <property type="evidence" value="ECO:0007669"/>
    <property type="project" value="Ensembl"/>
</dbReference>
<dbReference type="GO" id="GO:0031072">
    <property type="term" value="F:heat shock protein binding"/>
    <property type="evidence" value="ECO:0007669"/>
    <property type="project" value="Ensembl"/>
</dbReference>
<dbReference type="GO" id="GO:0032795">
    <property type="term" value="F:heterotrimeric G-protein binding"/>
    <property type="evidence" value="ECO:0007669"/>
    <property type="project" value="Ensembl"/>
</dbReference>
<dbReference type="GO" id="GO:0046982">
    <property type="term" value="F:protein heterodimerization activity"/>
    <property type="evidence" value="ECO:0007669"/>
    <property type="project" value="Ensembl"/>
</dbReference>
<dbReference type="GO" id="GO:0001883">
    <property type="term" value="F:purine nucleoside binding"/>
    <property type="evidence" value="ECO:0007669"/>
    <property type="project" value="Ensembl"/>
</dbReference>
<dbReference type="GO" id="GO:0007193">
    <property type="term" value="P:adenylate cyclase-inhibiting G protein-coupled receptor signaling pathway"/>
    <property type="evidence" value="ECO:0007669"/>
    <property type="project" value="Ensembl"/>
</dbReference>
<dbReference type="GO" id="GO:0097190">
    <property type="term" value="P:apoptotic signaling pathway"/>
    <property type="evidence" value="ECO:0000304"/>
    <property type="project" value="ProtInc"/>
</dbReference>
<dbReference type="GO" id="GO:0007267">
    <property type="term" value="P:cell-cell signaling"/>
    <property type="evidence" value="ECO:0000304"/>
    <property type="project" value="ProtInc"/>
</dbReference>
<dbReference type="GO" id="GO:0050890">
    <property type="term" value="P:cognition"/>
    <property type="evidence" value="ECO:0007669"/>
    <property type="project" value="Ensembl"/>
</dbReference>
<dbReference type="GO" id="GO:0050965">
    <property type="term" value="P:detection of temperature stimulus involved in sensory perception of pain"/>
    <property type="evidence" value="ECO:0007669"/>
    <property type="project" value="Ensembl"/>
</dbReference>
<dbReference type="GO" id="GO:0060079">
    <property type="term" value="P:excitatory postsynaptic potential"/>
    <property type="evidence" value="ECO:0007669"/>
    <property type="project" value="Ensembl"/>
</dbReference>
<dbReference type="GO" id="GO:0055089">
    <property type="term" value="P:fatty acid homeostasis"/>
    <property type="evidence" value="ECO:0007669"/>
    <property type="project" value="Ensembl"/>
</dbReference>
<dbReference type="GO" id="GO:0035589">
    <property type="term" value="P:G protein-coupled purinergic nucleotide receptor signaling pathway"/>
    <property type="evidence" value="ECO:0000250"/>
    <property type="project" value="BHF-UCL"/>
</dbReference>
<dbReference type="GO" id="GO:0007186">
    <property type="term" value="P:G protein-coupled receptor signaling pathway"/>
    <property type="evidence" value="ECO:0000318"/>
    <property type="project" value="GO_Central"/>
</dbReference>
<dbReference type="GO" id="GO:0006954">
    <property type="term" value="P:inflammatory response"/>
    <property type="evidence" value="ECO:0000304"/>
    <property type="project" value="ProtInc"/>
</dbReference>
<dbReference type="GO" id="GO:0050900">
    <property type="term" value="P:leukocyte migration"/>
    <property type="evidence" value="ECO:0007669"/>
    <property type="project" value="Ensembl"/>
</dbReference>
<dbReference type="GO" id="GO:0016042">
    <property type="term" value="P:lipid catabolic process"/>
    <property type="evidence" value="ECO:0007669"/>
    <property type="project" value="Ensembl"/>
</dbReference>
<dbReference type="GO" id="GO:0060292">
    <property type="term" value="P:long-term synaptic depression"/>
    <property type="evidence" value="ECO:0007669"/>
    <property type="project" value="Ensembl"/>
</dbReference>
<dbReference type="GO" id="GO:0070254">
    <property type="term" value="P:mucus secretion"/>
    <property type="evidence" value="ECO:0007669"/>
    <property type="project" value="Ensembl"/>
</dbReference>
<dbReference type="GO" id="GO:0002674">
    <property type="term" value="P:negative regulation of acute inflammatory response"/>
    <property type="evidence" value="ECO:0007669"/>
    <property type="project" value="Ensembl"/>
</dbReference>
<dbReference type="GO" id="GO:0043066">
    <property type="term" value="P:negative regulation of apoptotic process"/>
    <property type="evidence" value="ECO:0007669"/>
    <property type="project" value="Ensembl"/>
</dbReference>
<dbReference type="GO" id="GO:0008285">
    <property type="term" value="P:negative regulation of cell population proliferation"/>
    <property type="evidence" value="ECO:0007669"/>
    <property type="project" value="Ensembl"/>
</dbReference>
<dbReference type="GO" id="GO:0042323">
    <property type="term" value="P:negative regulation of circadian sleep/wake cycle, non-REM sleep"/>
    <property type="evidence" value="ECO:0007669"/>
    <property type="project" value="Ensembl"/>
</dbReference>
<dbReference type="GO" id="GO:0014050">
    <property type="term" value="P:negative regulation of glutamate secretion"/>
    <property type="evidence" value="ECO:0007669"/>
    <property type="project" value="Ensembl"/>
</dbReference>
<dbReference type="GO" id="GO:0046888">
    <property type="term" value="P:negative regulation of hormone secretion"/>
    <property type="evidence" value="ECO:0007669"/>
    <property type="project" value="Ensembl"/>
</dbReference>
<dbReference type="GO" id="GO:0002686">
    <property type="term" value="P:negative regulation of leukocyte migration"/>
    <property type="evidence" value="ECO:0007669"/>
    <property type="project" value="Ensembl"/>
</dbReference>
<dbReference type="GO" id="GO:0050995">
    <property type="term" value="P:negative regulation of lipid catabolic process"/>
    <property type="evidence" value="ECO:0007669"/>
    <property type="project" value="Ensembl"/>
</dbReference>
<dbReference type="GO" id="GO:1900453">
    <property type="term" value="P:negative regulation of long-term synaptic depression"/>
    <property type="evidence" value="ECO:0007669"/>
    <property type="project" value="Ensembl"/>
</dbReference>
<dbReference type="GO" id="GO:1900272">
    <property type="term" value="P:negative regulation of long-term synaptic potentiation"/>
    <property type="evidence" value="ECO:0007669"/>
    <property type="project" value="Ensembl"/>
</dbReference>
<dbReference type="GO" id="GO:0070256">
    <property type="term" value="P:negative regulation of mucus secretion"/>
    <property type="evidence" value="ECO:0007669"/>
    <property type="project" value="Ensembl"/>
</dbReference>
<dbReference type="GO" id="GO:0032900">
    <property type="term" value="P:negative regulation of neurotrophin production"/>
    <property type="evidence" value="ECO:0007669"/>
    <property type="project" value="Ensembl"/>
</dbReference>
<dbReference type="GO" id="GO:0032229">
    <property type="term" value="P:negative regulation of synaptic transmission, GABAergic"/>
    <property type="evidence" value="ECO:0007669"/>
    <property type="project" value="Ensembl"/>
</dbReference>
<dbReference type="GO" id="GO:0051967">
    <property type="term" value="P:negative regulation of synaptic transmission, glutamatergic"/>
    <property type="evidence" value="ECO:0007669"/>
    <property type="project" value="Ensembl"/>
</dbReference>
<dbReference type="GO" id="GO:0003085">
    <property type="term" value="P:negative regulation of systemic arterial blood pressure"/>
    <property type="evidence" value="ECO:0007669"/>
    <property type="project" value="Ensembl"/>
</dbReference>
<dbReference type="GO" id="GO:0007399">
    <property type="term" value="P:nervous system development"/>
    <property type="evidence" value="ECO:0000304"/>
    <property type="project" value="ProtInc"/>
</dbReference>
<dbReference type="GO" id="GO:0006909">
    <property type="term" value="P:phagocytosis"/>
    <property type="evidence" value="ECO:0000304"/>
    <property type="project" value="ProtInc"/>
</dbReference>
<dbReference type="GO" id="GO:0035306">
    <property type="term" value="P:positive regulation of dephosphorylation"/>
    <property type="evidence" value="ECO:0007669"/>
    <property type="project" value="Ensembl"/>
</dbReference>
<dbReference type="GO" id="GO:0050996">
    <property type="term" value="P:positive regulation of lipid catabolic process"/>
    <property type="evidence" value="ECO:0007669"/>
    <property type="project" value="Ensembl"/>
</dbReference>
<dbReference type="GO" id="GO:0043410">
    <property type="term" value="P:positive regulation of MAPK cascade"/>
    <property type="evidence" value="ECO:0007669"/>
    <property type="project" value="Ensembl"/>
</dbReference>
<dbReference type="GO" id="GO:0032244">
    <property type="term" value="P:positive regulation of nucleoside transport"/>
    <property type="evidence" value="ECO:0007669"/>
    <property type="project" value="Ensembl"/>
</dbReference>
<dbReference type="GO" id="GO:0002793">
    <property type="term" value="P:positive regulation of peptide secretion"/>
    <property type="evidence" value="ECO:0007669"/>
    <property type="project" value="Ensembl"/>
</dbReference>
<dbReference type="GO" id="GO:0043268">
    <property type="term" value="P:positive regulation of potassium ion transport"/>
    <property type="evidence" value="ECO:0007669"/>
    <property type="project" value="Ensembl"/>
</dbReference>
<dbReference type="GO" id="GO:0003084">
    <property type="term" value="P:positive regulation of systemic arterial blood pressure"/>
    <property type="evidence" value="ECO:0007669"/>
    <property type="project" value="Ensembl"/>
</dbReference>
<dbReference type="GO" id="GO:0006612">
    <property type="term" value="P:protein targeting to membrane"/>
    <property type="evidence" value="ECO:0007669"/>
    <property type="project" value="Ensembl"/>
</dbReference>
<dbReference type="GO" id="GO:0086004">
    <property type="term" value="P:regulation of cardiac muscle cell contraction"/>
    <property type="evidence" value="ECO:0007669"/>
    <property type="project" value="Ensembl"/>
</dbReference>
<dbReference type="GO" id="GO:0003093">
    <property type="term" value="P:regulation of glomerular filtration"/>
    <property type="evidence" value="ECO:0007669"/>
    <property type="project" value="Ensembl"/>
</dbReference>
<dbReference type="GO" id="GO:0099509">
    <property type="term" value="P:regulation of presynaptic cytosolic calcium ion concentration"/>
    <property type="evidence" value="ECO:0007669"/>
    <property type="project" value="Ensembl"/>
</dbReference>
<dbReference type="GO" id="GO:0002087">
    <property type="term" value="P:regulation of respiratory gaseous exchange by nervous system process"/>
    <property type="evidence" value="ECO:0007669"/>
    <property type="project" value="Ensembl"/>
</dbReference>
<dbReference type="GO" id="GO:0051930">
    <property type="term" value="P:regulation of sensory perception of pain"/>
    <property type="evidence" value="ECO:0007669"/>
    <property type="project" value="Ensembl"/>
</dbReference>
<dbReference type="GO" id="GO:0001666">
    <property type="term" value="P:response to hypoxia"/>
    <property type="evidence" value="ECO:0007669"/>
    <property type="project" value="Ensembl"/>
</dbReference>
<dbReference type="GO" id="GO:0014074">
    <property type="term" value="P:response to purine-containing compound"/>
    <property type="evidence" value="ECO:0000314"/>
    <property type="project" value="MGI"/>
</dbReference>
<dbReference type="GO" id="GO:0007165">
    <property type="term" value="P:signal transduction"/>
    <property type="evidence" value="ECO:0000304"/>
    <property type="project" value="ProtInc"/>
</dbReference>
<dbReference type="GO" id="GO:0001659">
    <property type="term" value="P:temperature homeostasis"/>
    <property type="evidence" value="ECO:0007669"/>
    <property type="project" value="Ensembl"/>
</dbReference>
<dbReference type="GO" id="GO:0070328">
    <property type="term" value="P:triglyceride homeostasis"/>
    <property type="evidence" value="ECO:0007669"/>
    <property type="project" value="Ensembl"/>
</dbReference>
<dbReference type="GO" id="GO:0042311">
    <property type="term" value="P:vasodilation"/>
    <property type="evidence" value="ECO:0007669"/>
    <property type="project" value="Ensembl"/>
</dbReference>
<dbReference type="CDD" id="cd15071">
    <property type="entry name" value="7tmA_Adenosine_R_A1"/>
    <property type="match status" value="1"/>
</dbReference>
<dbReference type="DisProt" id="DP02651"/>
<dbReference type="FunFam" id="1.20.1070.10:FF:000061">
    <property type="entry name" value="Adenosine receptor A2"/>
    <property type="match status" value="1"/>
</dbReference>
<dbReference type="Gene3D" id="1.20.1070.10">
    <property type="entry name" value="Rhodopsin 7-helix transmembrane proteins"/>
    <property type="match status" value="1"/>
</dbReference>
<dbReference type="InterPro" id="IPR001068">
    <property type="entry name" value="Adeno_A1_rcpt"/>
</dbReference>
<dbReference type="InterPro" id="IPR001634">
    <property type="entry name" value="Adenosn_rcpt"/>
</dbReference>
<dbReference type="InterPro" id="IPR000276">
    <property type="entry name" value="GPCR_Rhodpsn"/>
</dbReference>
<dbReference type="InterPro" id="IPR017452">
    <property type="entry name" value="GPCR_Rhodpsn_7TM"/>
</dbReference>
<dbReference type="PANTHER" id="PTHR24246:SF1">
    <property type="entry name" value="ADENOSINE RECEPTOR A1"/>
    <property type="match status" value="1"/>
</dbReference>
<dbReference type="PANTHER" id="PTHR24246">
    <property type="entry name" value="OLFACTORY RECEPTOR AND ADENOSINE RECEPTOR"/>
    <property type="match status" value="1"/>
</dbReference>
<dbReference type="Pfam" id="PF00001">
    <property type="entry name" value="7tm_1"/>
    <property type="match status" value="1"/>
</dbReference>
<dbReference type="PRINTS" id="PR00552">
    <property type="entry name" value="ADENOSINEA1R"/>
</dbReference>
<dbReference type="PRINTS" id="PR00424">
    <property type="entry name" value="ADENOSINER"/>
</dbReference>
<dbReference type="PRINTS" id="PR00237">
    <property type="entry name" value="GPCRRHODOPSN"/>
</dbReference>
<dbReference type="SMART" id="SM01381">
    <property type="entry name" value="7TM_GPCR_Srsx"/>
    <property type="match status" value="1"/>
</dbReference>
<dbReference type="SUPFAM" id="SSF81321">
    <property type="entry name" value="Family A G protein-coupled receptor-like"/>
    <property type="match status" value="1"/>
</dbReference>
<dbReference type="PROSITE" id="PS00237">
    <property type="entry name" value="G_PROTEIN_RECEP_F1_1"/>
    <property type="match status" value="1"/>
</dbReference>
<dbReference type="PROSITE" id="PS50262">
    <property type="entry name" value="G_PROTEIN_RECEP_F1_2"/>
    <property type="match status" value="1"/>
</dbReference>
<evidence type="ECO:0000255" key="1"/>
<evidence type="ECO:0000255" key="2">
    <source>
        <dbReference type="PROSITE-ProRule" id="PRU00521"/>
    </source>
</evidence>
<evidence type="ECO:0000269" key="3">
    <source>
    </source>
</evidence>
<evidence type="ECO:0000269" key="4">
    <source>
    </source>
</evidence>
<evidence type="ECO:0000269" key="5">
    <source>
    </source>
</evidence>
<evidence type="ECO:0000303" key="6">
    <source ref="6"/>
</evidence>
<evidence type="ECO:0000305" key="7"/>
<evidence type="ECO:0007829" key="8">
    <source>
        <dbReference type="PDB" id="5UEN"/>
    </source>
</evidence>
<evidence type="ECO:0007829" key="9">
    <source>
        <dbReference type="PDB" id="7LD3"/>
    </source>
</evidence>
<gene>
    <name type="primary">ADORA1</name>
</gene>
<sequence length="326" mass="36512">MPPSISAFQAAYIGIEVLIALVSVPGNVLVIWAVKVNQALRDATFCFIVSLAVADVAVGALVIPLAILINIGPQTYFHTCLMVACPVLILTQSSILALLAIAVDRYLRVKIPLRYKMVVTPRRAAVAIAGCWILSFVVGLTPMFGWNNLSAVERAWAANGSMGEPVIKCEFEKVISMEYMVYFNFFVWVLPPLLLMVLIYLEVFYLIRKQLNKKVSASSGDPQKYYGKELKIAKSLALILFLFALSWLPLHILNCITLFCPSCHKPSILTYIAIFLTHGNSAMNPIVYAFRIQKFRVTFLKIWNDHFRCQPAPPIDEDLPEERPDD</sequence>
<reference key="1">
    <citation type="journal article" date="1992" name="Biochem. Biophys. Res. Commun.">
        <title>Cloning and functional characterization of a human A1 adenosine receptor.</title>
        <authorList>
            <person name="Libert F."/>
            <person name="van Sande J."/>
            <person name="Lefort A."/>
            <person name="Czernilofsky A."/>
            <person name="Dumont J.E."/>
            <person name="Vassart G."/>
            <person name="Ensinger H.A."/>
            <person name="Mendla K.D."/>
        </authorList>
    </citation>
    <scope>NUCLEOTIDE SEQUENCE [MRNA] (ISOFORM 1)</scope>
    <source>
        <tissue>Hippocampus</tissue>
    </source>
</reference>
<reference key="2">
    <citation type="journal article" date="1992" name="Brain Res. Mol. Brain Res.">
        <title>Molecular cloning and characterisation of a human brain A1 adenosine receptor cDNA.</title>
        <authorList>
            <person name="Townsend-Nicholson A."/>
            <person name="Shine J."/>
        </authorList>
    </citation>
    <scope>NUCLEOTIDE SEQUENCE [MRNA] (ISOFORM 1)</scope>
    <source>
        <tissue>Brain</tissue>
    </source>
</reference>
<reference key="3">
    <citation type="journal article" date="1994" name="J. Biol. Chem.">
        <title>Characterization of the human A1 adenosine receptor gene. Evidence for alternative splicing.</title>
        <authorList>
            <person name="Ren H."/>
            <person name="Stiles G.L."/>
        </authorList>
    </citation>
    <scope>NUCLEOTIDE SEQUENCE [MRNA] (ISOFORM 1)</scope>
    <source>
        <tissue>Hippocampus</tissue>
    </source>
</reference>
<reference key="4">
    <citation type="submission" date="1992-09" db="EMBL/GenBank/DDBJ databases">
        <authorList>
            <person name="Salvatore C.A."/>
            <person name="Luneau C.J."/>
            <person name="Johnson R.G."/>
            <person name="Jacobson M."/>
        </authorList>
    </citation>
    <scope>NUCLEOTIDE SEQUENCE [MRNA] (ISOFORM 1)</scope>
    <source>
        <tissue>Brain</tissue>
    </source>
</reference>
<reference key="5">
    <citation type="submission" date="1997-06" db="EMBL/GenBank/DDBJ databases">
        <title>Complete nucleotide sequence of an adenosine A1-receptor from heart.</title>
        <authorList>
            <person name="Hirabatake Y."/>
            <person name="Takao K."/>
            <person name="Hagiwara S."/>
            <person name="Kasanuki H."/>
            <person name="Hosoda S."/>
            <person name="Kokubun S."/>
        </authorList>
    </citation>
    <scope>NUCLEOTIDE SEQUENCE [MRNA] (ISOFORM 1)</scope>
    <source>
        <tissue>Heart</tissue>
    </source>
</reference>
<reference key="6">
    <citation type="submission" date="2006-10" db="EMBL/GenBank/DDBJ databases">
        <title>Identification of a 3TM adenosine receptor subtype 1 variant.</title>
        <authorList>
            <person name="Feng Y.-H."/>
            <person name="Cheng H."/>
            <person name="Qiu R."/>
        </authorList>
    </citation>
    <scope>NUCLEOTIDE SEQUENCE [MRNA] (ISOFORM 2)</scope>
</reference>
<reference key="7">
    <citation type="journal article" date="2004" name="Nat. Genet.">
        <title>Complete sequencing and characterization of 21,243 full-length human cDNAs.</title>
        <authorList>
            <person name="Ota T."/>
            <person name="Suzuki Y."/>
            <person name="Nishikawa T."/>
            <person name="Otsuki T."/>
            <person name="Sugiyama T."/>
            <person name="Irie R."/>
            <person name="Wakamatsu A."/>
            <person name="Hayashi K."/>
            <person name="Sato H."/>
            <person name="Nagai K."/>
            <person name="Kimura K."/>
            <person name="Makita H."/>
            <person name="Sekine M."/>
            <person name="Obayashi M."/>
            <person name="Nishi T."/>
            <person name="Shibahara T."/>
            <person name="Tanaka T."/>
            <person name="Ishii S."/>
            <person name="Yamamoto J."/>
            <person name="Saito K."/>
            <person name="Kawai Y."/>
            <person name="Isono Y."/>
            <person name="Nakamura Y."/>
            <person name="Nagahari K."/>
            <person name="Murakami K."/>
            <person name="Yasuda T."/>
            <person name="Iwayanagi T."/>
            <person name="Wagatsuma M."/>
            <person name="Shiratori A."/>
            <person name="Sudo H."/>
            <person name="Hosoiri T."/>
            <person name="Kaku Y."/>
            <person name="Kodaira H."/>
            <person name="Kondo H."/>
            <person name="Sugawara M."/>
            <person name="Takahashi M."/>
            <person name="Kanda K."/>
            <person name="Yokoi T."/>
            <person name="Furuya T."/>
            <person name="Kikkawa E."/>
            <person name="Omura Y."/>
            <person name="Abe K."/>
            <person name="Kamihara K."/>
            <person name="Katsuta N."/>
            <person name="Sato K."/>
            <person name="Tanikawa M."/>
            <person name="Yamazaki M."/>
            <person name="Ninomiya K."/>
            <person name="Ishibashi T."/>
            <person name="Yamashita H."/>
            <person name="Murakawa K."/>
            <person name="Fujimori K."/>
            <person name="Tanai H."/>
            <person name="Kimata M."/>
            <person name="Watanabe M."/>
            <person name="Hiraoka S."/>
            <person name="Chiba Y."/>
            <person name="Ishida S."/>
            <person name="Ono Y."/>
            <person name="Takiguchi S."/>
            <person name="Watanabe S."/>
            <person name="Yosida M."/>
            <person name="Hotuta T."/>
            <person name="Kusano J."/>
            <person name="Kanehori K."/>
            <person name="Takahashi-Fujii A."/>
            <person name="Hara H."/>
            <person name="Tanase T.-O."/>
            <person name="Nomura Y."/>
            <person name="Togiya S."/>
            <person name="Komai F."/>
            <person name="Hara R."/>
            <person name="Takeuchi K."/>
            <person name="Arita M."/>
            <person name="Imose N."/>
            <person name="Musashino K."/>
            <person name="Yuuki H."/>
            <person name="Oshima A."/>
            <person name="Sasaki N."/>
            <person name="Aotsuka S."/>
            <person name="Yoshikawa Y."/>
            <person name="Matsunawa H."/>
            <person name="Ichihara T."/>
            <person name="Shiohata N."/>
            <person name="Sano S."/>
            <person name="Moriya S."/>
            <person name="Momiyama H."/>
            <person name="Satoh N."/>
            <person name="Takami S."/>
            <person name="Terashima Y."/>
            <person name="Suzuki O."/>
            <person name="Nakagawa S."/>
            <person name="Senoh A."/>
            <person name="Mizoguchi H."/>
            <person name="Goto Y."/>
            <person name="Shimizu F."/>
            <person name="Wakebe H."/>
            <person name="Hishigaki H."/>
            <person name="Watanabe T."/>
            <person name="Sugiyama A."/>
            <person name="Takemoto M."/>
            <person name="Kawakami B."/>
            <person name="Yamazaki M."/>
            <person name="Watanabe K."/>
            <person name="Kumagai A."/>
            <person name="Itakura S."/>
            <person name="Fukuzumi Y."/>
            <person name="Fujimori Y."/>
            <person name="Komiyama M."/>
            <person name="Tashiro H."/>
            <person name="Tanigami A."/>
            <person name="Fujiwara T."/>
            <person name="Ono T."/>
            <person name="Yamada K."/>
            <person name="Fujii Y."/>
            <person name="Ozaki K."/>
            <person name="Hirao M."/>
            <person name="Ohmori Y."/>
            <person name="Kawabata A."/>
            <person name="Hikiji T."/>
            <person name="Kobatake N."/>
            <person name="Inagaki H."/>
            <person name="Ikema Y."/>
            <person name="Okamoto S."/>
            <person name="Okitani R."/>
            <person name="Kawakami T."/>
            <person name="Noguchi S."/>
            <person name="Itoh T."/>
            <person name="Shigeta K."/>
            <person name="Senba T."/>
            <person name="Matsumura K."/>
            <person name="Nakajima Y."/>
            <person name="Mizuno T."/>
            <person name="Morinaga M."/>
            <person name="Sasaki M."/>
            <person name="Togashi T."/>
            <person name="Oyama M."/>
            <person name="Hata H."/>
            <person name="Watanabe M."/>
            <person name="Komatsu T."/>
            <person name="Mizushima-Sugano J."/>
            <person name="Satoh T."/>
            <person name="Shirai Y."/>
            <person name="Takahashi Y."/>
            <person name="Nakagawa K."/>
            <person name="Okumura K."/>
            <person name="Nagase T."/>
            <person name="Nomura N."/>
            <person name="Kikuchi H."/>
            <person name="Masuho Y."/>
            <person name="Yamashita R."/>
            <person name="Nakai K."/>
            <person name="Yada T."/>
            <person name="Nakamura Y."/>
            <person name="Ohara O."/>
            <person name="Isogai T."/>
            <person name="Sugano S."/>
        </authorList>
    </citation>
    <scope>NUCLEOTIDE SEQUENCE [LARGE SCALE MRNA] (ISOFORM 1)</scope>
    <source>
        <tissue>Brain</tissue>
        <tissue>Hippocampus</tissue>
    </source>
</reference>
<reference key="8">
    <citation type="submission" date="2002-07" db="EMBL/GenBank/DDBJ databases">
        <title>cDNA clones of human proteins involved in signal transduction sequenced by the Guthrie cDNA resource center (www.cdna.org).</title>
        <authorList>
            <person name="Puhl H.L. III"/>
            <person name="Ikeda S.R."/>
            <person name="Aronstam R.S."/>
        </authorList>
    </citation>
    <scope>NUCLEOTIDE SEQUENCE [LARGE SCALE MRNA] (ISOFORM 1)</scope>
    <source>
        <tissue>Brain</tissue>
    </source>
</reference>
<reference key="9">
    <citation type="submission" date="2003-05" db="EMBL/GenBank/DDBJ databases">
        <title>Cloning of human full-length CDSs in BD Creator(TM) system donor vector.</title>
        <authorList>
            <person name="Kalnine N."/>
            <person name="Chen X."/>
            <person name="Rolfs A."/>
            <person name="Halleck A."/>
            <person name="Hines L."/>
            <person name="Eisenstein S."/>
            <person name="Koundinya M."/>
            <person name="Raphael J."/>
            <person name="Moreira D."/>
            <person name="Kelley T."/>
            <person name="LaBaer J."/>
            <person name="Lin Y."/>
            <person name="Phelan M."/>
            <person name="Farmer A."/>
        </authorList>
    </citation>
    <scope>NUCLEOTIDE SEQUENCE [LARGE SCALE MRNA] (ISOFORM 1)</scope>
</reference>
<reference key="10">
    <citation type="submission" date="2004-06" db="EMBL/GenBank/DDBJ databases">
        <title>Cloning of human full open reading frames in Gateway(TM) system entry vector (pDONR201).</title>
        <authorList>
            <person name="Ebert L."/>
            <person name="Schick M."/>
            <person name="Neubert P."/>
            <person name="Schatten R."/>
            <person name="Henze S."/>
            <person name="Korn B."/>
        </authorList>
    </citation>
    <scope>NUCLEOTIDE SEQUENCE [LARGE SCALE MRNA] (ISOFORM 1)</scope>
</reference>
<reference key="11">
    <citation type="journal article" date="2006" name="Nature">
        <title>The DNA sequence and biological annotation of human chromosome 1.</title>
        <authorList>
            <person name="Gregory S.G."/>
            <person name="Barlow K.F."/>
            <person name="McLay K.E."/>
            <person name="Kaul R."/>
            <person name="Swarbreck D."/>
            <person name="Dunham A."/>
            <person name="Scott C.E."/>
            <person name="Howe K.L."/>
            <person name="Woodfine K."/>
            <person name="Spencer C.C.A."/>
            <person name="Jones M.C."/>
            <person name="Gillson C."/>
            <person name="Searle S."/>
            <person name="Zhou Y."/>
            <person name="Kokocinski F."/>
            <person name="McDonald L."/>
            <person name="Evans R."/>
            <person name="Phillips K."/>
            <person name="Atkinson A."/>
            <person name="Cooper R."/>
            <person name="Jones C."/>
            <person name="Hall R.E."/>
            <person name="Andrews T.D."/>
            <person name="Lloyd C."/>
            <person name="Ainscough R."/>
            <person name="Almeida J.P."/>
            <person name="Ambrose K.D."/>
            <person name="Anderson F."/>
            <person name="Andrew R.W."/>
            <person name="Ashwell R.I.S."/>
            <person name="Aubin K."/>
            <person name="Babbage A.K."/>
            <person name="Bagguley C.L."/>
            <person name="Bailey J."/>
            <person name="Beasley H."/>
            <person name="Bethel G."/>
            <person name="Bird C.P."/>
            <person name="Bray-Allen S."/>
            <person name="Brown J.Y."/>
            <person name="Brown A.J."/>
            <person name="Buckley D."/>
            <person name="Burton J."/>
            <person name="Bye J."/>
            <person name="Carder C."/>
            <person name="Chapman J.C."/>
            <person name="Clark S.Y."/>
            <person name="Clarke G."/>
            <person name="Clee C."/>
            <person name="Cobley V."/>
            <person name="Collier R.E."/>
            <person name="Corby N."/>
            <person name="Coville G.J."/>
            <person name="Davies J."/>
            <person name="Deadman R."/>
            <person name="Dunn M."/>
            <person name="Earthrowl M."/>
            <person name="Ellington A.G."/>
            <person name="Errington H."/>
            <person name="Frankish A."/>
            <person name="Frankland J."/>
            <person name="French L."/>
            <person name="Garner P."/>
            <person name="Garnett J."/>
            <person name="Gay L."/>
            <person name="Ghori M.R.J."/>
            <person name="Gibson R."/>
            <person name="Gilby L.M."/>
            <person name="Gillett W."/>
            <person name="Glithero R.J."/>
            <person name="Grafham D.V."/>
            <person name="Griffiths C."/>
            <person name="Griffiths-Jones S."/>
            <person name="Grocock R."/>
            <person name="Hammond S."/>
            <person name="Harrison E.S.I."/>
            <person name="Hart E."/>
            <person name="Haugen E."/>
            <person name="Heath P.D."/>
            <person name="Holmes S."/>
            <person name="Holt K."/>
            <person name="Howden P.J."/>
            <person name="Hunt A.R."/>
            <person name="Hunt S.E."/>
            <person name="Hunter G."/>
            <person name="Isherwood J."/>
            <person name="James R."/>
            <person name="Johnson C."/>
            <person name="Johnson D."/>
            <person name="Joy A."/>
            <person name="Kay M."/>
            <person name="Kershaw J.K."/>
            <person name="Kibukawa M."/>
            <person name="Kimberley A.M."/>
            <person name="King A."/>
            <person name="Knights A.J."/>
            <person name="Lad H."/>
            <person name="Laird G."/>
            <person name="Lawlor S."/>
            <person name="Leongamornlert D.A."/>
            <person name="Lloyd D.M."/>
            <person name="Loveland J."/>
            <person name="Lovell J."/>
            <person name="Lush M.J."/>
            <person name="Lyne R."/>
            <person name="Martin S."/>
            <person name="Mashreghi-Mohammadi M."/>
            <person name="Matthews L."/>
            <person name="Matthews N.S.W."/>
            <person name="McLaren S."/>
            <person name="Milne S."/>
            <person name="Mistry S."/>
            <person name="Moore M.J.F."/>
            <person name="Nickerson T."/>
            <person name="O'Dell C.N."/>
            <person name="Oliver K."/>
            <person name="Palmeiri A."/>
            <person name="Palmer S.A."/>
            <person name="Parker A."/>
            <person name="Patel D."/>
            <person name="Pearce A.V."/>
            <person name="Peck A.I."/>
            <person name="Pelan S."/>
            <person name="Phelps K."/>
            <person name="Phillimore B.J."/>
            <person name="Plumb R."/>
            <person name="Rajan J."/>
            <person name="Raymond C."/>
            <person name="Rouse G."/>
            <person name="Saenphimmachak C."/>
            <person name="Sehra H.K."/>
            <person name="Sheridan E."/>
            <person name="Shownkeen R."/>
            <person name="Sims S."/>
            <person name="Skuce C.D."/>
            <person name="Smith M."/>
            <person name="Steward C."/>
            <person name="Subramanian S."/>
            <person name="Sycamore N."/>
            <person name="Tracey A."/>
            <person name="Tromans A."/>
            <person name="Van Helmond Z."/>
            <person name="Wall M."/>
            <person name="Wallis J.M."/>
            <person name="White S."/>
            <person name="Whitehead S.L."/>
            <person name="Wilkinson J.E."/>
            <person name="Willey D.L."/>
            <person name="Williams H."/>
            <person name="Wilming L."/>
            <person name="Wray P.W."/>
            <person name="Wu Z."/>
            <person name="Coulson A."/>
            <person name="Vaudin M."/>
            <person name="Sulston J.E."/>
            <person name="Durbin R.M."/>
            <person name="Hubbard T."/>
            <person name="Wooster R."/>
            <person name="Dunham I."/>
            <person name="Carter N.P."/>
            <person name="McVean G."/>
            <person name="Ross M.T."/>
            <person name="Harrow J."/>
            <person name="Olson M.V."/>
            <person name="Beck S."/>
            <person name="Rogers J."/>
            <person name="Bentley D.R."/>
        </authorList>
    </citation>
    <scope>NUCLEOTIDE SEQUENCE [LARGE SCALE GENOMIC DNA]</scope>
</reference>
<reference key="12">
    <citation type="submission" date="2005-07" db="EMBL/GenBank/DDBJ databases">
        <authorList>
            <person name="Mural R.J."/>
            <person name="Istrail S."/>
            <person name="Sutton G.G."/>
            <person name="Florea L."/>
            <person name="Halpern A.L."/>
            <person name="Mobarry C.M."/>
            <person name="Lippert R."/>
            <person name="Walenz B."/>
            <person name="Shatkay H."/>
            <person name="Dew I."/>
            <person name="Miller J.R."/>
            <person name="Flanigan M.J."/>
            <person name="Edwards N.J."/>
            <person name="Bolanos R."/>
            <person name="Fasulo D."/>
            <person name="Halldorsson B.V."/>
            <person name="Hannenhalli S."/>
            <person name="Turner R."/>
            <person name="Yooseph S."/>
            <person name="Lu F."/>
            <person name="Nusskern D.R."/>
            <person name="Shue B.C."/>
            <person name="Zheng X.H."/>
            <person name="Zhong F."/>
            <person name="Delcher A.L."/>
            <person name="Huson D.H."/>
            <person name="Kravitz S.A."/>
            <person name="Mouchard L."/>
            <person name="Reinert K."/>
            <person name="Remington K.A."/>
            <person name="Clark A.G."/>
            <person name="Waterman M.S."/>
            <person name="Eichler E.E."/>
            <person name="Adams M.D."/>
            <person name="Hunkapiller M.W."/>
            <person name="Myers E.W."/>
            <person name="Venter J.C."/>
        </authorList>
    </citation>
    <scope>NUCLEOTIDE SEQUENCE [LARGE SCALE GENOMIC DNA]</scope>
</reference>
<reference key="13">
    <citation type="journal article" date="2004" name="Genome Res.">
        <title>The status, quality, and expansion of the NIH full-length cDNA project: the Mammalian Gene Collection (MGC).</title>
        <authorList>
            <consortium name="The MGC Project Team"/>
        </authorList>
    </citation>
    <scope>NUCLEOTIDE SEQUENCE [LARGE SCALE MRNA] (ISOFORM 1)</scope>
    <scope>VARIANTS SER-43; PRO-50; HIS-105 AND GLN-261</scope>
    <source>
        <tissue>Brain</tissue>
    </source>
</reference>
<reference key="14">
    <citation type="journal article" date="2006" name="Science">
        <title>The consensus coding sequences of human breast and colorectal cancers.</title>
        <authorList>
            <person name="Sjoeblom T."/>
            <person name="Jones S."/>
            <person name="Wood L.D."/>
            <person name="Parsons D.W."/>
            <person name="Lin J."/>
            <person name="Barber T.D."/>
            <person name="Mandelker D."/>
            <person name="Leary R.J."/>
            <person name="Ptak J."/>
            <person name="Silliman N."/>
            <person name="Szabo S."/>
            <person name="Buckhaults P."/>
            <person name="Farrell C."/>
            <person name="Meeh P."/>
            <person name="Markowitz S.D."/>
            <person name="Willis J."/>
            <person name="Dawson D."/>
            <person name="Willson J.K.V."/>
            <person name="Gazdar A.F."/>
            <person name="Hartigan J."/>
            <person name="Wu L."/>
            <person name="Liu C."/>
            <person name="Parmigiani G."/>
            <person name="Park B.H."/>
            <person name="Bachman K.E."/>
            <person name="Papadopoulos N."/>
            <person name="Vogelstein B."/>
            <person name="Kinzler K.W."/>
            <person name="Velculescu V.E."/>
        </authorList>
    </citation>
    <scope>VARIANT [LARGE SCALE ANALYSIS] LYS-170</scope>
</reference>
<reference key="15">
    <citation type="journal article" date="2016" name="Mov. Disord.">
        <title>Mutation in ADORA1 identified as likely cause of early-onset parkinsonism and cognitive dysfunction.</title>
        <authorList>
            <person name="Jaberi E."/>
            <person name="Rohani M."/>
            <person name="Shahidi G.A."/>
            <person name="Nafissi S."/>
            <person name="Arefian E."/>
            <person name="Soleimani M."/>
            <person name="Moghadam A."/>
            <person name="Arzenani M.K."/>
            <person name="Keramatian F."/>
            <person name="Klotzle B."/>
            <person name="Fan J.B."/>
            <person name="Turk C."/>
            <person name="Steemers F."/>
            <person name="Elahi E."/>
        </authorList>
    </citation>
    <scope>VARIANT SER-279</scope>
    <scope>CHARACTERIZATION OF VARIANT SER-279</scope>
    <scope>SUBCELLULAR LOCATION</scope>
</reference>
<comment type="function">
    <text>Receptor for adenosine. The activity of this receptor is mediated by G proteins which inhibit adenylyl cyclase.</text>
</comment>
<comment type="interaction">
    <interactant intactId="EBI-2903663">
        <id>P30542</id>
    </interactant>
    <interactant intactId="EBI-2902702">
        <id>P29274</id>
        <label>ADORA2A</label>
    </interactant>
    <organismsDiffer>false</organismsDiffer>
    <experiments>4</experiments>
</comment>
<comment type="interaction">
    <interactant intactId="EBI-2903663">
        <id>P30542</id>
    </interactant>
    <interactant intactId="EBI-991009">
        <id>P08588</id>
        <label>ADRB1</label>
    </interactant>
    <organismsDiffer>false</organismsDiffer>
    <experiments>5</experiments>
</comment>
<comment type="interaction">
    <interactant intactId="EBI-2903663">
        <id>P30542</id>
    </interactant>
    <interactant intactId="EBI-491169">
        <id>P07550</id>
        <label>ADRB2</label>
    </interactant>
    <organismsDiffer>false</organismsDiffer>
    <experiments>5</experiments>
</comment>
<comment type="interaction">
    <interactant intactId="EBI-2903663">
        <id>P30542</id>
    </interactant>
    <interactant intactId="EBI-13939599">
        <id>P16473</id>
        <label>TSHR</label>
    </interactant>
    <organismsDiffer>false</organismsDiffer>
    <experiments>2</experiments>
</comment>
<comment type="subcellular location">
    <subcellularLocation>
        <location evidence="5">Cell membrane</location>
        <topology>Multi-pass membrane protein</topology>
    </subcellularLocation>
</comment>
<comment type="alternative products">
    <event type="alternative splicing"/>
    <isoform>
        <id>P30542-1</id>
        <name>1</name>
        <sequence type="displayed"/>
    </isoform>
    <isoform>
        <id>P30542-2</id>
        <name>2</name>
        <sequence type="described" ref="VSP_034401 VSP_034402"/>
    </isoform>
</comment>
<comment type="similarity">
    <text evidence="2">Belongs to the G-protein coupled receptor 1 family.</text>
</comment>
<name>AA1R_HUMAN</name>
<proteinExistence type="evidence at protein level"/>
<organism>
    <name type="scientific">Homo sapiens</name>
    <name type="common">Human</name>
    <dbReference type="NCBI Taxonomy" id="9606"/>
    <lineage>
        <taxon>Eukaryota</taxon>
        <taxon>Metazoa</taxon>
        <taxon>Chordata</taxon>
        <taxon>Craniata</taxon>
        <taxon>Vertebrata</taxon>
        <taxon>Euteleostomi</taxon>
        <taxon>Mammalia</taxon>
        <taxon>Eutheria</taxon>
        <taxon>Euarchontoglires</taxon>
        <taxon>Primates</taxon>
        <taxon>Haplorrhini</taxon>
        <taxon>Catarrhini</taxon>
        <taxon>Hominidae</taxon>
        <taxon>Homo</taxon>
    </lineage>
</organism>
<keyword id="KW-0002">3D-structure</keyword>
<keyword id="KW-0025">Alternative splicing</keyword>
<keyword id="KW-1003">Cell membrane</keyword>
<keyword id="KW-1015">Disulfide bond</keyword>
<keyword id="KW-0297">G-protein coupled receptor</keyword>
<keyword id="KW-0325">Glycoprotein</keyword>
<keyword id="KW-0449">Lipoprotein</keyword>
<keyword id="KW-0472">Membrane</keyword>
<keyword id="KW-0564">Palmitate</keyword>
<keyword id="KW-1267">Proteomics identification</keyword>
<keyword id="KW-0675">Receptor</keyword>
<keyword id="KW-1185">Reference proteome</keyword>
<keyword id="KW-0807">Transducer</keyword>
<keyword id="KW-0812">Transmembrane</keyword>
<keyword id="KW-1133">Transmembrane helix</keyword>